<accession>Q619V5</accession>
<accession>A8XJA9</accession>
<proteinExistence type="inferred from homology"/>
<dbReference type="EMBL" id="AY634298">
    <property type="protein sequence ID" value="AAW02904.1"/>
    <property type="molecule type" value="Genomic_DNA"/>
</dbReference>
<dbReference type="EMBL" id="HE600983">
    <property type="protein sequence ID" value="CAP32734.1"/>
    <property type="molecule type" value="Genomic_DNA"/>
</dbReference>
<dbReference type="SMR" id="Q619V5"/>
<dbReference type="FunCoup" id="Q619V5">
    <property type="interactions" value="3"/>
</dbReference>
<dbReference type="STRING" id="6238.Q619V5"/>
<dbReference type="EnsemblMetazoa" id="CBG14082.1">
    <property type="protein sequence ID" value="CBG14082.1"/>
    <property type="gene ID" value="WBGene00034703"/>
</dbReference>
<dbReference type="KEGG" id="cbr:CBG_14082"/>
<dbReference type="CTD" id="8586291"/>
<dbReference type="WormBase" id="CBG14082">
    <property type="protein sequence ID" value="CBP17998"/>
    <property type="gene ID" value="WBGene00034703"/>
    <property type="gene designation" value="Cbr-gpa-5"/>
</dbReference>
<dbReference type="eggNOG" id="KOG0082">
    <property type="taxonomic scope" value="Eukaryota"/>
</dbReference>
<dbReference type="HOGENOM" id="CLU_014184_6_0_1"/>
<dbReference type="InParanoid" id="Q619V5"/>
<dbReference type="OMA" id="HMRQTTL"/>
<dbReference type="Proteomes" id="UP000008549">
    <property type="component" value="Unassembled WGS sequence"/>
</dbReference>
<dbReference type="GO" id="GO:0030424">
    <property type="term" value="C:axon"/>
    <property type="evidence" value="ECO:0007669"/>
    <property type="project" value="EnsemblMetazoa"/>
</dbReference>
<dbReference type="GO" id="GO:0005737">
    <property type="term" value="C:cytoplasm"/>
    <property type="evidence" value="ECO:0000318"/>
    <property type="project" value="GO_Central"/>
</dbReference>
<dbReference type="GO" id="GO:0005834">
    <property type="term" value="C:heterotrimeric G-protein complex"/>
    <property type="evidence" value="ECO:0000318"/>
    <property type="project" value="GO_Central"/>
</dbReference>
<dbReference type="GO" id="GO:0043025">
    <property type="term" value="C:neuronal cell body"/>
    <property type="evidence" value="ECO:0007669"/>
    <property type="project" value="EnsemblMetazoa"/>
</dbReference>
<dbReference type="GO" id="GO:0045202">
    <property type="term" value="C:synapse"/>
    <property type="evidence" value="ECO:0007669"/>
    <property type="project" value="EnsemblMetazoa"/>
</dbReference>
<dbReference type="GO" id="GO:0001664">
    <property type="term" value="F:G protein-coupled receptor binding"/>
    <property type="evidence" value="ECO:0000318"/>
    <property type="project" value="GO_Central"/>
</dbReference>
<dbReference type="GO" id="GO:0031683">
    <property type="term" value="F:G-protein beta/gamma-subunit complex binding"/>
    <property type="evidence" value="ECO:0000318"/>
    <property type="project" value="GO_Central"/>
</dbReference>
<dbReference type="GO" id="GO:0005525">
    <property type="term" value="F:GTP binding"/>
    <property type="evidence" value="ECO:0007669"/>
    <property type="project" value="UniProtKB-KW"/>
</dbReference>
<dbReference type="GO" id="GO:0003924">
    <property type="term" value="F:GTPase activity"/>
    <property type="evidence" value="ECO:0000318"/>
    <property type="project" value="GO_Central"/>
</dbReference>
<dbReference type="GO" id="GO:0046872">
    <property type="term" value="F:metal ion binding"/>
    <property type="evidence" value="ECO:0007669"/>
    <property type="project" value="UniProtKB-KW"/>
</dbReference>
<dbReference type="GO" id="GO:0007188">
    <property type="term" value="P:adenylate cyclase-modulating G protein-coupled receptor signaling pathway"/>
    <property type="evidence" value="ECO:0000318"/>
    <property type="project" value="GO_Central"/>
</dbReference>
<dbReference type="CDD" id="cd00066">
    <property type="entry name" value="G-alpha"/>
    <property type="match status" value="1"/>
</dbReference>
<dbReference type="FunFam" id="3.40.50.300:FF:000692">
    <property type="entry name" value="Guanine nucleotide-binding protein subunit alpha"/>
    <property type="match status" value="2"/>
</dbReference>
<dbReference type="Gene3D" id="1.10.400.10">
    <property type="entry name" value="GI Alpha 1, domain 2-like"/>
    <property type="match status" value="1"/>
</dbReference>
<dbReference type="Gene3D" id="3.40.50.300">
    <property type="entry name" value="P-loop containing nucleotide triphosphate hydrolases"/>
    <property type="match status" value="1"/>
</dbReference>
<dbReference type="InterPro" id="IPR001019">
    <property type="entry name" value="Gprotein_alpha_su"/>
</dbReference>
<dbReference type="InterPro" id="IPR011025">
    <property type="entry name" value="GproteinA_insert"/>
</dbReference>
<dbReference type="InterPro" id="IPR027417">
    <property type="entry name" value="P-loop_NTPase"/>
</dbReference>
<dbReference type="PANTHER" id="PTHR10218">
    <property type="entry name" value="GTP-BINDING PROTEIN ALPHA SUBUNIT"/>
    <property type="match status" value="1"/>
</dbReference>
<dbReference type="PANTHER" id="PTHR10218:SF302">
    <property type="entry name" value="GUANINE NUCLEOTIDE-BINDING PROTEIN ALPHA-5 SUBUNIT"/>
    <property type="match status" value="1"/>
</dbReference>
<dbReference type="Pfam" id="PF00503">
    <property type="entry name" value="G-alpha"/>
    <property type="match status" value="1"/>
</dbReference>
<dbReference type="PRINTS" id="PR00318">
    <property type="entry name" value="GPROTEINA"/>
</dbReference>
<dbReference type="SMART" id="SM00275">
    <property type="entry name" value="G_alpha"/>
    <property type="match status" value="1"/>
</dbReference>
<dbReference type="SUPFAM" id="SSF52540">
    <property type="entry name" value="P-loop containing nucleoside triphosphate hydrolases"/>
    <property type="match status" value="1"/>
</dbReference>
<dbReference type="SUPFAM" id="SSF47895">
    <property type="entry name" value="Transducin (alpha subunit), insertion domain"/>
    <property type="match status" value="1"/>
</dbReference>
<dbReference type="PROSITE" id="PS51882">
    <property type="entry name" value="G_ALPHA"/>
    <property type="match status" value="1"/>
</dbReference>
<organism>
    <name type="scientific">Caenorhabditis briggsae</name>
    <dbReference type="NCBI Taxonomy" id="6238"/>
    <lineage>
        <taxon>Eukaryota</taxon>
        <taxon>Metazoa</taxon>
        <taxon>Ecdysozoa</taxon>
        <taxon>Nematoda</taxon>
        <taxon>Chromadorea</taxon>
        <taxon>Rhabditida</taxon>
        <taxon>Rhabditina</taxon>
        <taxon>Rhabditomorpha</taxon>
        <taxon>Rhabditoidea</taxon>
        <taxon>Rhabditidae</taxon>
        <taxon>Peloderinae</taxon>
        <taxon>Caenorhabditis</taxon>
    </lineage>
</organism>
<evidence type="ECO:0000250" key="1"/>
<evidence type="ECO:0000255" key="2"/>
<evidence type="ECO:0000255" key="3">
    <source>
        <dbReference type="PROSITE-ProRule" id="PRU01230"/>
    </source>
</evidence>
<evidence type="ECO:0000305" key="4"/>
<sequence>MGIALCKPERDAAAKNRQIETQIRIENQANKRKIKMLLLGISDSGKSTIVKQMRVNYCNGFNETEVVNAIFLIRNNIIDAFKHISLLILDSHIIKSDTEKVLLKLFAFESQKIEMMQEVDELRLINSIRVLECISVFFEHYSYHPMIPDNIHYFFPHLERIAISEYMPTVEDLIHMRQTTLGVHEISFDYQTQTIRLIDVGGQKTERRKWIHFFEGVTAVMFVCSLSSFNQATEQEPNNAFAWETSLNKVQNKILVRSTGKAKQRPGMVNRLDESVDLFTSIRENNFLKSSNFMLFLNKIDLLGKKLETIQFVNHFPAYEQWITNDNSVQSVAEFIESMFREGLDADQKIYAHLTQATITTNIEYTFGLCCDVIFNKNIETLSLE</sequence>
<reference key="1">
    <citation type="journal article" date="2005" name="Mol. Genet. Genomics">
        <title>Functional constraint and divergence in the G protein family in Caenorhabditis elegans and Caenorhabditis briggsae.</title>
        <authorList>
            <person name="Jovelin R."/>
            <person name="Phillips P.C."/>
        </authorList>
    </citation>
    <scope>NUCLEOTIDE SEQUENCE [GENOMIC DNA]</scope>
    <source>
        <strain>AF16</strain>
    </source>
</reference>
<reference key="2">
    <citation type="journal article" date="2003" name="PLoS Biol.">
        <title>The genome sequence of Caenorhabditis briggsae: a platform for comparative genomics.</title>
        <authorList>
            <person name="Stein L.D."/>
            <person name="Bao Z."/>
            <person name="Blasiar D."/>
            <person name="Blumenthal T."/>
            <person name="Brent M.R."/>
            <person name="Chen N."/>
            <person name="Chinwalla A."/>
            <person name="Clarke L."/>
            <person name="Clee C."/>
            <person name="Coghlan A."/>
            <person name="Coulson A."/>
            <person name="D'Eustachio P."/>
            <person name="Fitch D.H.A."/>
            <person name="Fulton L.A."/>
            <person name="Fulton R.E."/>
            <person name="Griffiths-Jones S."/>
            <person name="Harris T.W."/>
            <person name="Hillier L.W."/>
            <person name="Kamath R."/>
            <person name="Kuwabara P.E."/>
            <person name="Mardis E.R."/>
            <person name="Marra M.A."/>
            <person name="Miner T.L."/>
            <person name="Minx P."/>
            <person name="Mullikin J.C."/>
            <person name="Plumb R.W."/>
            <person name="Rogers J."/>
            <person name="Schein J.E."/>
            <person name="Sohrmann M."/>
            <person name="Spieth J."/>
            <person name="Stajich J.E."/>
            <person name="Wei C."/>
            <person name="Willey D."/>
            <person name="Wilson R.K."/>
            <person name="Durbin R.M."/>
            <person name="Waterston R.H."/>
        </authorList>
    </citation>
    <scope>NUCLEOTIDE SEQUENCE [LARGE SCALE GENOMIC DNA]</scope>
    <source>
        <strain>AF16</strain>
    </source>
</reference>
<protein>
    <recommendedName>
        <fullName>Guanine nucleotide-binding protein alpha-5 subunit</fullName>
    </recommendedName>
</protein>
<feature type="initiator methionine" description="Removed" evidence="2">
    <location>
        <position position="1"/>
    </location>
</feature>
<feature type="chain" id="PRO_0000203636" description="Guanine nucleotide-binding protein alpha-5 subunit">
    <location>
        <begin position="2"/>
        <end position="385"/>
    </location>
</feature>
<feature type="domain" description="G-alpha" evidence="3">
    <location>
        <begin position="32"/>
        <end position="385"/>
    </location>
</feature>
<feature type="region of interest" description="G1 motif" evidence="3">
    <location>
        <begin position="35"/>
        <end position="48"/>
    </location>
</feature>
<feature type="region of interest" description="G2 motif" evidence="3">
    <location>
        <begin position="172"/>
        <end position="180"/>
    </location>
</feature>
<feature type="region of interest" description="G3 motif" evidence="3">
    <location>
        <begin position="195"/>
        <end position="204"/>
    </location>
</feature>
<feature type="region of interest" description="G4 motif" evidence="3">
    <location>
        <begin position="294"/>
        <end position="301"/>
    </location>
</feature>
<feature type="region of interest" description="G5 motif" evidence="3">
    <location>
        <begin position="355"/>
        <end position="360"/>
    </location>
</feature>
<feature type="binding site" evidence="1">
    <location>
        <begin position="40"/>
        <end position="47"/>
    </location>
    <ligand>
        <name>GTP</name>
        <dbReference type="ChEBI" id="CHEBI:37565"/>
    </ligand>
</feature>
<feature type="binding site" evidence="1">
    <location>
        <position position="47"/>
    </location>
    <ligand>
        <name>Mg(2+)</name>
        <dbReference type="ChEBI" id="CHEBI:18420"/>
    </ligand>
</feature>
<feature type="binding site" evidence="1">
    <location>
        <begin position="174"/>
        <end position="180"/>
    </location>
    <ligand>
        <name>GTP</name>
        <dbReference type="ChEBI" id="CHEBI:37565"/>
    </ligand>
</feature>
<feature type="binding site" evidence="1">
    <location>
        <position position="180"/>
    </location>
    <ligand>
        <name>Mg(2+)</name>
        <dbReference type="ChEBI" id="CHEBI:18420"/>
    </ligand>
</feature>
<feature type="binding site" evidence="1">
    <location>
        <begin position="199"/>
        <end position="203"/>
    </location>
    <ligand>
        <name>GTP</name>
        <dbReference type="ChEBI" id="CHEBI:37565"/>
    </ligand>
</feature>
<feature type="binding site" evidence="1">
    <location>
        <begin position="298"/>
        <end position="301"/>
    </location>
    <ligand>
        <name>GTP</name>
        <dbReference type="ChEBI" id="CHEBI:37565"/>
    </ligand>
</feature>
<feature type="binding site" evidence="1">
    <location>
        <position position="357"/>
    </location>
    <ligand>
        <name>GTP</name>
        <dbReference type="ChEBI" id="CHEBI:37565"/>
    </ligand>
</feature>
<feature type="lipid moiety-binding region" description="N-myristoyl glycine" evidence="2">
    <location>
        <position position="2"/>
    </location>
</feature>
<feature type="lipid moiety-binding region" description="S-palmitoyl cysteine" evidence="2">
    <location>
        <position position="6"/>
    </location>
</feature>
<keyword id="KW-0342">GTP-binding</keyword>
<keyword id="KW-0449">Lipoprotein</keyword>
<keyword id="KW-0460">Magnesium</keyword>
<keyword id="KW-0479">Metal-binding</keyword>
<keyword id="KW-0519">Myristate</keyword>
<keyword id="KW-0547">Nucleotide-binding</keyword>
<keyword id="KW-0564">Palmitate</keyword>
<keyword id="KW-1185">Reference proteome</keyword>
<keyword id="KW-0807">Transducer</keyword>
<name>GPA5_CAEBR</name>
<comment type="function">
    <text>Guanine nucleotide-binding proteins (G proteins) are involved as modulators or transducers in various transmembrane signaling systems.</text>
</comment>
<comment type="subunit">
    <text>G proteins are composed of 3 units; alpha, beta and gamma. The alpha chain contains the guanine nucleotide binding site.</text>
</comment>
<comment type="similarity">
    <text evidence="4">Belongs to the G-alpha family.</text>
</comment>
<gene>
    <name type="primary">gpa-5</name>
    <name type="ORF">CBG14082</name>
</gene>